<reference key="1">
    <citation type="journal article" date="2005" name="Proc. Natl. Acad. Sci. U.S.A.">
        <title>Isolation and functional expression of an animal geranyl diphosphate synthase and its role in bark beetle pheromone biosynthesis.</title>
        <authorList>
            <person name="Gilg A.B."/>
            <person name="Bearfield J.C."/>
            <person name="Tittiger C."/>
            <person name="Welch W.H."/>
            <person name="Blomquist G.J."/>
        </authorList>
    </citation>
    <scope>NUCLEOTIDE SEQUENCE [MRNA]</scope>
    <scope>FUNCTION</scope>
    <scope>CATALYTIC ACTIVITY</scope>
    <scope>PATHWAY</scope>
    <scope>TISSUE SPECIFICITY</scope>
    <scope>INDUCTION</scope>
</reference>
<keyword id="KW-0414">Isoprene biosynthesis</keyword>
<keyword id="KW-0460">Magnesium</keyword>
<keyword id="KW-0479">Metal-binding</keyword>
<keyword id="KW-0808">Transferase</keyword>
<protein>
    <recommendedName>
        <fullName evidence="3">Geranyl diphosphate synthase</fullName>
        <ecNumber evidence="5">2.5.1.1</ecNumber>
    </recommendedName>
</protein>
<feature type="chain" id="PRO_0000455288" description="Geranyl diphosphate synthase">
    <location>
        <begin position="1"/>
        <end position="416"/>
    </location>
</feature>
<feature type="short sequence motif" description="DDXXD motif" evidence="4">
    <location>
        <begin position="157"/>
        <end position="161"/>
    </location>
</feature>
<feature type="binding site" evidence="1">
    <location>
        <position position="157"/>
    </location>
    <ligand>
        <name>Mg(2+)</name>
        <dbReference type="ChEBI" id="CHEBI:18420"/>
        <label>1</label>
    </ligand>
</feature>
<feature type="binding site" evidence="1">
    <location>
        <position position="157"/>
    </location>
    <ligand>
        <name>Mg(2+)</name>
        <dbReference type="ChEBI" id="CHEBI:18420"/>
        <label>2</label>
    </ligand>
</feature>
<feature type="binding site" evidence="1">
    <location>
        <position position="161"/>
    </location>
    <ligand>
        <name>Mg(2+)</name>
        <dbReference type="ChEBI" id="CHEBI:18420"/>
        <label>1</label>
    </ligand>
</feature>
<feature type="binding site" evidence="1">
    <location>
        <position position="161"/>
    </location>
    <ligand>
        <name>Mg(2+)</name>
        <dbReference type="ChEBI" id="CHEBI:18420"/>
        <label>2</label>
    </ligand>
</feature>
<gene>
    <name evidence="3" type="primary">GPPS</name>
</gene>
<organism>
    <name type="scientific">Ips pini</name>
    <name type="common">Pine engraver beetle</name>
    <dbReference type="NCBI Taxonomy" id="102803"/>
    <lineage>
        <taxon>Eukaryota</taxon>
        <taxon>Metazoa</taxon>
        <taxon>Ecdysozoa</taxon>
        <taxon>Arthropoda</taxon>
        <taxon>Hexapoda</taxon>
        <taxon>Insecta</taxon>
        <taxon>Pterygota</taxon>
        <taxon>Neoptera</taxon>
        <taxon>Endopterygota</taxon>
        <taxon>Coleoptera</taxon>
        <taxon>Polyphaga</taxon>
        <taxon>Cucujiformia</taxon>
        <taxon>Curculionidae</taxon>
        <taxon>Scolytinae</taxon>
        <taxon>Ips</taxon>
    </lineage>
</organism>
<sequence length="416" mass="48324">MFKLAQRLPKSVSSLGSQLSKNAPNQLAAATTSQLINTPGIRHKSRSSAVPSSLSKSMYDHNEEMKAAMKYMDEIYPEVMGQIEKVPQYEEIKPILVRLREAIDYTVPYGKRFKGVHIVSHFKLLADPKFITPENVKLSGVLGWCAEIIQAYFCMLDDIMDDSDTRRGKPTWYKLPGIGLNAVTDVCLMEMFTFELLKRYFPKHPSYADIHEILRNLLFLTHMGQGYDFTFIDPVTRKINFNDFTEENYTKLCRYKIIFSTFHNTLELTSAMANVYDPKKIKQLDPVLMRIGMMHQSQNDFKDLYRDQGEVLKQAEKSVLGTDIKTGQLTWFAQKALSICNDRQRKIIMDNYGKEDNKNSEAVREVYEELDLKGKFMEFEEESFEWLKKEIPKINNGIPHKVFQDYTYGVFKRRPE</sequence>
<comment type="function">
    <text evidence="2">Geranyl diphosphate synthase involved in pheromone biosynthesis.</text>
</comment>
<comment type="catalytic activity">
    <reaction evidence="5">
        <text>isopentenyl diphosphate + dimethylallyl diphosphate = (2E)-geranyl diphosphate + diphosphate</text>
        <dbReference type="Rhea" id="RHEA:22408"/>
        <dbReference type="ChEBI" id="CHEBI:33019"/>
        <dbReference type="ChEBI" id="CHEBI:57623"/>
        <dbReference type="ChEBI" id="CHEBI:58057"/>
        <dbReference type="ChEBI" id="CHEBI:128769"/>
        <dbReference type="EC" id="2.5.1.1"/>
    </reaction>
    <physiologicalReaction direction="left-to-right" evidence="5">
        <dbReference type="Rhea" id="RHEA:22409"/>
    </physiologicalReaction>
</comment>
<comment type="cofactor">
    <cofactor evidence="1">
        <name>Mg(2+)</name>
        <dbReference type="ChEBI" id="CHEBI:18420"/>
    </cofactor>
    <text evidence="1">Binds 2 Mg(2+) ions per subunit.</text>
</comment>
<comment type="pathway">
    <text evidence="2">Pheromone biosynthesis.</text>
</comment>
<comment type="tissue specificity">
    <text evidence="2">Specifically expressed in the anterior midgut of male beetles, the site of aggregation pheromone biosynthesis.</text>
</comment>
<comment type="induction">
    <text evidence="2">Specifically induced in the anterior midgut of males (PubMed:15983375). Expression levels are regulated by juvenile hormone III (JH III) (PubMed:15983375).</text>
</comment>
<comment type="domain">
    <text evidence="4">The Asp-Asp-Xaa-Xaa-Asp/Glu (DDXXD/E) motif is important for the catalytic activity, presumably through binding to Mg(2+).</text>
</comment>
<comment type="similarity">
    <text evidence="4">Belongs to the FPP/GGPP synthase family.</text>
</comment>
<proteinExistence type="evidence at protein level"/>
<name>GPPS_IPSPI</name>
<accession>Q58GE8</accession>
<dbReference type="EC" id="2.5.1.1" evidence="5"/>
<dbReference type="EMBL" id="AY953508">
    <property type="protein sequence ID" value="AAX55632.1"/>
    <property type="molecule type" value="mRNA"/>
</dbReference>
<dbReference type="SMR" id="Q58GE8"/>
<dbReference type="BioCyc" id="MetaCyc:MONOMER-18357"/>
<dbReference type="BRENDA" id="2.5.1.1">
    <property type="organism ID" value="7894"/>
</dbReference>
<dbReference type="BRENDA" id="4.2.3.15">
    <property type="organism ID" value="7894"/>
</dbReference>
<dbReference type="GO" id="GO:0005737">
    <property type="term" value="C:cytoplasm"/>
    <property type="evidence" value="ECO:0007669"/>
    <property type="project" value="TreeGrafter"/>
</dbReference>
<dbReference type="GO" id="GO:0004337">
    <property type="term" value="F:(2E,6E)-farnesyl diphosphate synthase activity"/>
    <property type="evidence" value="ECO:0007669"/>
    <property type="project" value="TreeGrafter"/>
</dbReference>
<dbReference type="GO" id="GO:0004161">
    <property type="term" value="F:dimethylallyltranstransferase activity"/>
    <property type="evidence" value="ECO:0007669"/>
    <property type="project" value="TreeGrafter"/>
</dbReference>
<dbReference type="GO" id="GO:0044687">
    <property type="term" value="F:geranylfarnesyl diphosphate synthase activity"/>
    <property type="evidence" value="ECO:0000314"/>
    <property type="project" value="UniProtKB"/>
</dbReference>
<dbReference type="GO" id="GO:0046872">
    <property type="term" value="F:metal ion binding"/>
    <property type="evidence" value="ECO:0007669"/>
    <property type="project" value="UniProtKB-KW"/>
</dbReference>
<dbReference type="GO" id="GO:0045337">
    <property type="term" value="P:farnesyl diphosphate biosynthetic process"/>
    <property type="evidence" value="ECO:0007669"/>
    <property type="project" value="TreeGrafter"/>
</dbReference>
<dbReference type="GO" id="GO:0008299">
    <property type="term" value="P:isoprenoid biosynthetic process"/>
    <property type="evidence" value="ECO:0000314"/>
    <property type="project" value="UniProtKB"/>
</dbReference>
<dbReference type="GO" id="GO:0042811">
    <property type="term" value="P:pheromone biosynthetic process"/>
    <property type="evidence" value="ECO:0000314"/>
    <property type="project" value="UniProtKB"/>
</dbReference>
<dbReference type="Gene3D" id="1.10.600.10">
    <property type="entry name" value="Farnesyl Diphosphate Synthase"/>
    <property type="match status" value="1"/>
</dbReference>
<dbReference type="InterPro" id="IPR039702">
    <property type="entry name" value="FPS1-like"/>
</dbReference>
<dbReference type="InterPro" id="IPR008949">
    <property type="entry name" value="Isoprenoid_synthase_dom_sf"/>
</dbReference>
<dbReference type="InterPro" id="IPR000092">
    <property type="entry name" value="Polyprenyl_synt"/>
</dbReference>
<dbReference type="PANTHER" id="PTHR11525:SF0">
    <property type="entry name" value="FARNESYL PYROPHOSPHATE SYNTHASE"/>
    <property type="match status" value="1"/>
</dbReference>
<dbReference type="PANTHER" id="PTHR11525">
    <property type="entry name" value="FARNESYL-PYROPHOSPHATE SYNTHETASE"/>
    <property type="match status" value="1"/>
</dbReference>
<dbReference type="Pfam" id="PF00348">
    <property type="entry name" value="polyprenyl_synt"/>
    <property type="match status" value="1"/>
</dbReference>
<dbReference type="SFLD" id="SFLDS00005">
    <property type="entry name" value="Isoprenoid_Synthase_Type_I"/>
    <property type="match status" value="1"/>
</dbReference>
<dbReference type="SUPFAM" id="SSF48576">
    <property type="entry name" value="Terpenoid synthases"/>
    <property type="match status" value="1"/>
</dbReference>
<evidence type="ECO:0000250" key="1">
    <source>
        <dbReference type="UniProtKB" id="P14324"/>
    </source>
</evidence>
<evidence type="ECO:0000269" key="2">
    <source>
    </source>
</evidence>
<evidence type="ECO:0000303" key="3">
    <source>
    </source>
</evidence>
<evidence type="ECO:0000305" key="4"/>
<evidence type="ECO:0000305" key="5">
    <source>
    </source>
</evidence>